<feature type="chain" id="PRO_0000351349" description="Autoinducer 2 import system permease protein LsrC">
    <location>
        <begin position="1"/>
        <end position="347"/>
    </location>
</feature>
<feature type="transmembrane region" description="Helical" evidence="2">
    <location>
        <begin position="14"/>
        <end position="34"/>
    </location>
</feature>
<feature type="transmembrane region" description="Helical" evidence="2">
    <location>
        <begin position="39"/>
        <end position="59"/>
    </location>
</feature>
<feature type="transmembrane region" description="Helical" evidence="2">
    <location>
        <begin position="72"/>
        <end position="92"/>
    </location>
</feature>
<feature type="transmembrane region" description="Helical" evidence="2">
    <location>
        <begin position="93"/>
        <end position="113"/>
    </location>
</feature>
<feature type="transmembrane region" description="Helical" evidence="2">
    <location>
        <begin position="115"/>
        <end position="135"/>
    </location>
</feature>
<feature type="transmembrane region" description="Helical" evidence="2">
    <location>
        <begin position="155"/>
        <end position="175"/>
    </location>
</feature>
<feature type="transmembrane region" description="Helical" evidence="2">
    <location>
        <begin position="213"/>
        <end position="233"/>
    </location>
</feature>
<feature type="transmembrane region" description="Helical" evidence="2">
    <location>
        <begin position="249"/>
        <end position="269"/>
    </location>
</feature>
<feature type="transmembrane region" description="Helical" evidence="2">
    <location>
        <begin position="284"/>
        <end position="304"/>
    </location>
</feature>
<evidence type="ECO:0000250" key="1"/>
<evidence type="ECO:0000255" key="2"/>
<evidence type="ECO:0000305" key="3"/>
<name>LSRC_SALTI</name>
<protein>
    <recommendedName>
        <fullName>Autoinducer 2 import system permease protein LsrC</fullName>
        <shortName>AI-2 import system permease protein LsrC</shortName>
    </recommendedName>
</protein>
<organism>
    <name type="scientific">Salmonella typhi</name>
    <dbReference type="NCBI Taxonomy" id="90370"/>
    <lineage>
        <taxon>Bacteria</taxon>
        <taxon>Pseudomonadati</taxon>
        <taxon>Pseudomonadota</taxon>
        <taxon>Gammaproteobacteria</taxon>
        <taxon>Enterobacterales</taxon>
        <taxon>Enterobacteriaceae</taxon>
        <taxon>Salmonella</taxon>
    </lineage>
</organism>
<reference key="1">
    <citation type="journal article" date="2001" name="Nature">
        <title>Complete genome sequence of a multiple drug resistant Salmonella enterica serovar Typhi CT18.</title>
        <authorList>
            <person name="Parkhill J."/>
            <person name="Dougan G."/>
            <person name="James K.D."/>
            <person name="Thomson N.R."/>
            <person name="Pickard D."/>
            <person name="Wain J."/>
            <person name="Churcher C.M."/>
            <person name="Mungall K.L."/>
            <person name="Bentley S.D."/>
            <person name="Holden M.T.G."/>
            <person name="Sebaihia M."/>
            <person name="Baker S."/>
            <person name="Basham D."/>
            <person name="Brooks K."/>
            <person name="Chillingworth T."/>
            <person name="Connerton P."/>
            <person name="Cronin A."/>
            <person name="Davis P."/>
            <person name="Davies R.M."/>
            <person name="Dowd L."/>
            <person name="White N."/>
            <person name="Farrar J."/>
            <person name="Feltwell T."/>
            <person name="Hamlin N."/>
            <person name="Haque A."/>
            <person name="Hien T.T."/>
            <person name="Holroyd S."/>
            <person name="Jagels K."/>
            <person name="Krogh A."/>
            <person name="Larsen T.S."/>
            <person name="Leather S."/>
            <person name="Moule S."/>
            <person name="O'Gaora P."/>
            <person name="Parry C."/>
            <person name="Quail M.A."/>
            <person name="Rutherford K.M."/>
            <person name="Simmonds M."/>
            <person name="Skelton J."/>
            <person name="Stevens K."/>
            <person name="Whitehead S."/>
            <person name="Barrell B.G."/>
        </authorList>
    </citation>
    <scope>NUCLEOTIDE SEQUENCE [LARGE SCALE GENOMIC DNA]</scope>
    <source>
        <strain>CT18</strain>
    </source>
</reference>
<reference key="2">
    <citation type="journal article" date="2003" name="J. Bacteriol.">
        <title>Comparative genomics of Salmonella enterica serovar Typhi strains Ty2 and CT18.</title>
        <authorList>
            <person name="Deng W."/>
            <person name="Liou S.-R."/>
            <person name="Plunkett G. III"/>
            <person name="Mayhew G.F."/>
            <person name="Rose D.J."/>
            <person name="Burland V."/>
            <person name="Kodoyianni V."/>
            <person name="Schwartz D.C."/>
            <person name="Blattner F.R."/>
        </authorList>
    </citation>
    <scope>NUCLEOTIDE SEQUENCE [LARGE SCALE GENOMIC DNA]</scope>
    <source>
        <strain>ATCC 700931 / Ty2</strain>
    </source>
</reference>
<keyword id="KW-0997">Cell inner membrane</keyword>
<keyword id="KW-1003">Cell membrane</keyword>
<keyword id="KW-0472">Membrane</keyword>
<keyword id="KW-0812">Transmembrane</keyword>
<keyword id="KW-1133">Transmembrane helix</keyword>
<keyword id="KW-0813">Transport</keyword>
<dbReference type="EMBL" id="AE014613">
    <property type="protein sequence ID" value="AAO71050.1"/>
    <property type="molecule type" value="Genomic_DNA"/>
</dbReference>
<dbReference type="EMBL" id="AL513382">
    <property type="protein sequence ID" value="CAD09548.1"/>
    <property type="molecule type" value="Genomic_DNA"/>
</dbReference>
<dbReference type="RefSeq" id="NP_457977.1">
    <property type="nucleotide sequence ID" value="NC_003198.1"/>
</dbReference>
<dbReference type="RefSeq" id="WP_000911130.1">
    <property type="nucleotide sequence ID" value="NZ_QXGZ01000015.1"/>
</dbReference>
<dbReference type="STRING" id="220341.gene:17587659"/>
<dbReference type="KEGG" id="stt:t3543"/>
<dbReference type="KEGG" id="sty:STY3795"/>
<dbReference type="PATRIC" id="fig|220341.7.peg.3873"/>
<dbReference type="eggNOG" id="COG1172">
    <property type="taxonomic scope" value="Bacteria"/>
</dbReference>
<dbReference type="HOGENOM" id="CLU_028880_0_1_6"/>
<dbReference type="OMA" id="FGRDFYA"/>
<dbReference type="OrthoDB" id="6384190at2"/>
<dbReference type="Proteomes" id="UP000000541">
    <property type="component" value="Chromosome"/>
</dbReference>
<dbReference type="Proteomes" id="UP000002670">
    <property type="component" value="Chromosome"/>
</dbReference>
<dbReference type="GO" id="GO:0005886">
    <property type="term" value="C:plasma membrane"/>
    <property type="evidence" value="ECO:0007669"/>
    <property type="project" value="UniProtKB-SubCell"/>
</dbReference>
<dbReference type="GO" id="GO:0022857">
    <property type="term" value="F:transmembrane transporter activity"/>
    <property type="evidence" value="ECO:0007669"/>
    <property type="project" value="InterPro"/>
</dbReference>
<dbReference type="CDD" id="cd06579">
    <property type="entry name" value="TM_PBP1_transp_AraH_like"/>
    <property type="match status" value="1"/>
</dbReference>
<dbReference type="InterPro" id="IPR001851">
    <property type="entry name" value="ABC_transp_permease"/>
</dbReference>
<dbReference type="NCBIfam" id="NF011961">
    <property type="entry name" value="PRK15432.1"/>
    <property type="match status" value="1"/>
</dbReference>
<dbReference type="PANTHER" id="PTHR32196">
    <property type="entry name" value="ABC TRANSPORTER PERMEASE PROTEIN YPHD-RELATED-RELATED"/>
    <property type="match status" value="1"/>
</dbReference>
<dbReference type="PANTHER" id="PTHR32196:SF29">
    <property type="entry name" value="AUTOINDUCER 2 IMPORT SYSTEM PERMEASE PROTEIN LSRC"/>
    <property type="match status" value="1"/>
</dbReference>
<dbReference type="Pfam" id="PF02653">
    <property type="entry name" value="BPD_transp_2"/>
    <property type="match status" value="1"/>
</dbReference>
<proteinExistence type="inferred from homology"/>
<gene>
    <name type="primary">lsrC</name>
    <name type="ordered locus">STY3795</name>
    <name type="ordered locus">t3543</name>
</gene>
<accession>Q8Z2X6</accession>
<accession>Q7C699</accession>
<sequence>MLKFIQNNREATALLAIVCLFVFLGALDSQYLSVQTLTMVFSSAQILMLLAIGATMVMLTRNIDVSVGSTTGMCAVLLGVMLNAGYSLPVACLATLILGIVAGFFNGVLVAWLKIPAIVATLGTLGLYRGIMLLWTGGKWIEGLPAGLKQLSAPVFLGISAIGWFTLVLALLMAWLLAKTAFGRNFYATGDNLQGARQLGVRTEMVRIMAFSLNGGMAALAGIVFASQIGFIPNQTGTGLEMKAIAACVLGGISLLGGSGTVIGAILGAYFLTQIDSVLVLLRIPAWWNDFIAGLVLLGVLVFDGRLRCALQRNLRRQKYARFISPPTPLQAEAKTHAQQNKNKEVA</sequence>
<comment type="function">
    <text evidence="1">Part of the ABC transporter complex LsrABCD involved in autoinducer 2 (AI-2) import. Probably responsible for the translocation of the substrate across the membrane (By similarity).</text>
</comment>
<comment type="subunit">
    <text evidence="1">The complex is composed of two ATP-binding proteins (LsrA), two transmembrane proteins (LsrC and LsrD) and a solute-binding protein (LsrB).</text>
</comment>
<comment type="subcellular location">
    <subcellularLocation>
        <location evidence="1">Cell inner membrane</location>
        <topology evidence="1">Multi-pass membrane protein</topology>
    </subcellularLocation>
</comment>
<comment type="similarity">
    <text evidence="3">Belongs to the binding-protein-dependent transport system permease family. AraH/RbsC subfamily.</text>
</comment>